<comment type="function">
    <text evidence="1">Catalyzes the last two sequential reactions in the de novo biosynthetic pathway for UDP-N-acetylglucosamine (UDP-GlcNAc). The C-terminal domain catalyzes the transfer of acetyl group from acetyl coenzyme A to glucosamine-1-phosphate (GlcN-1-P) to produce N-acetylglucosamine-1-phosphate (GlcNAc-1-P), which is converted into UDP-GlcNAc by the transfer of uridine 5-monophosphate (from uridine 5-triphosphate), a reaction catalyzed by the N-terminal domain.</text>
</comment>
<comment type="catalytic activity">
    <reaction evidence="1">
        <text>alpha-D-glucosamine 1-phosphate + acetyl-CoA = N-acetyl-alpha-D-glucosamine 1-phosphate + CoA + H(+)</text>
        <dbReference type="Rhea" id="RHEA:13725"/>
        <dbReference type="ChEBI" id="CHEBI:15378"/>
        <dbReference type="ChEBI" id="CHEBI:57287"/>
        <dbReference type="ChEBI" id="CHEBI:57288"/>
        <dbReference type="ChEBI" id="CHEBI:57776"/>
        <dbReference type="ChEBI" id="CHEBI:58516"/>
        <dbReference type="EC" id="2.3.1.157"/>
    </reaction>
</comment>
<comment type="catalytic activity">
    <reaction evidence="1">
        <text>N-acetyl-alpha-D-glucosamine 1-phosphate + UTP + H(+) = UDP-N-acetyl-alpha-D-glucosamine + diphosphate</text>
        <dbReference type="Rhea" id="RHEA:13509"/>
        <dbReference type="ChEBI" id="CHEBI:15378"/>
        <dbReference type="ChEBI" id="CHEBI:33019"/>
        <dbReference type="ChEBI" id="CHEBI:46398"/>
        <dbReference type="ChEBI" id="CHEBI:57705"/>
        <dbReference type="ChEBI" id="CHEBI:57776"/>
        <dbReference type="EC" id="2.7.7.23"/>
    </reaction>
</comment>
<comment type="cofactor">
    <cofactor evidence="1">
        <name>Mg(2+)</name>
        <dbReference type="ChEBI" id="CHEBI:18420"/>
    </cofactor>
    <text evidence="1">Binds 1 Mg(2+) ion per subunit.</text>
</comment>
<comment type="pathway">
    <text evidence="1">Nucleotide-sugar biosynthesis; UDP-N-acetyl-alpha-D-glucosamine biosynthesis; N-acetyl-alpha-D-glucosamine 1-phosphate from alpha-D-glucosamine 6-phosphate (route II): step 2/2.</text>
</comment>
<comment type="pathway">
    <text evidence="1">Nucleotide-sugar biosynthesis; UDP-N-acetyl-alpha-D-glucosamine biosynthesis; UDP-N-acetyl-alpha-D-glucosamine from N-acetyl-alpha-D-glucosamine 1-phosphate: step 1/1.</text>
</comment>
<comment type="pathway">
    <text evidence="1">Bacterial outer membrane biogenesis; LPS lipid A biosynthesis.</text>
</comment>
<comment type="subunit">
    <text evidence="1">Homotrimer.</text>
</comment>
<comment type="subcellular location">
    <subcellularLocation>
        <location evidence="1">Cytoplasm</location>
    </subcellularLocation>
</comment>
<comment type="similarity">
    <text evidence="1">In the N-terminal section; belongs to the N-acetylglucosamine-1-phosphate uridyltransferase family.</text>
</comment>
<comment type="similarity">
    <text evidence="1">In the C-terminal section; belongs to the transferase hexapeptide repeat family.</text>
</comment>
<name>GLMU_NITV9</name>
<organism>
    <name type="scientific">Nitratidesulfovibrio vulgaris (strain DSM 19637 / Miyazaki F)</name>
    <name type="common">Desulfovibrio vulgaris</name>
    <dbReference type="NCBI Taxonomy" id="883"/>
    <lineage>
        <taxon>Bacteria</taxon>
        <taxon>Pseudomonadati</taxon>
        <taxon>Thermodesulfobacteriota</taxon>
        <taxon>Desulfovibrionia</taxon>
        <taxon>Desulfovibrionales</taxon>
        <taxon>Desulfovibrionaceae</taxon>
        <taxon>Nitratidesulfovibrio</taxon>
    </lineage>
</organism>
<evidence type="ECO:0000255" key="1">
    <source>
        <dbReference type="HAMAP-Rule" id="MF_01631"/>
    </source>
</evidence>
<reference key="1">
    <citation type="submission" date="2008-10" db="EMBL/GenBank/DDBJ databases">
        <title>Complete sequence of Desulfovibrio vulgaris str. 'Miyazaki F'.</title>
        <authorList>
            <person name="Lucas S."/>
            <person name="Copeland A."/>
            <person name="Lapidus A."/>
            <person name="Glavina del Rio T."/>
            <person name="Dalin E."/>
            <person name="Tice H."/>
            <person name="Bruce D."/>
            <person name="Goodwin L."/>
            <person name="Pitluck S."/>
            <person name="Sims D."/>
            <person name="Brettin T."/>
            <person name="Detter J.C."/>
            <person name="Han C."/>
            <person name="Larimer F."/>
            <person name="Land M."/>
            <person name="Hauser L."/>
            <person name="Kyrpides N."/>
            <person name="Mikhailova N."/>
            <person name="Hazen T.C."/>
            <person name="Richardson P."/>
        </authorList>
    </citation>
    <scope>NUCLEOTIDE SEQUENCE [LARGE SCALE GENOMIC DNA]</scope>
    <source>
        <strain>DSM 19637 / Miyazaki F</strain>
    </source>
</reference>
<proteinExistence type="inferred from homology"/>
<dbReference type="EC" id="2.7.7.23" evidence="1"/>
<dbReference type="EC" id="2.3.1.157" evidence="1"/>
<dbReference type="EMBL" id="CP001197">
    <property type="protein sequence ID" value="ACL08134.1"/>
    <property type="molecule type" value="Genomic_DNA"/>
</dbReference>
<dbReference type="SMR" id="B8DKH2"/>
<dbReference type="STRING" id="883.DvMF_1181"/>
<dbReference type="KEGG" id="dvm:DvMF_1181"/>
<dbReference type="eggNOG" id="COG1207">
    <property type="taxonomic scope" value="Bacteria"/>
</dbReference>
<dbReference type="HOGENOM" id="CLU_029499_15_2_7"/>
<dbReference type="OrthoDB" id="9775031at2"/>
<dbReference type="UniPathway" id="UPA00113">
    <property type="reaction ID" value="UER00532"/>
</dbReference>
<dbReference type="UniPathway" id="UPA00113">
    <property type="reaction ID" value="UER00533"/>
</dbReference>
<dbReference type="UniPathway" id="UPA00973"/>
<dbReference type="GO" id="GO:0005737">
    <property type="term" value="C:cytoplasm"/>
    <property type="evidence" value="ECO:0007669"/>
    <property type="project" value="UniProtKB-SubCell"/>
</dbReference>
<dbReference type="GO" id="GO:0016020">
    <property type="term" value="C:membrane"/>
    <property type="evidence" value="ECO:0007669"/>
    <property type="project" value="GOC"/>
</dbReference>
<dbReference type="GO" id="GO:0019134">
    <property type="term" value="F:glucosamine-1-phosphate N-acetyltransferase activity"/>
    <property type="evidence" value="ECO:0007669"/>
    <property type="project" value="UniProtKB-UniRule"/>
</dbReference>
<dbReference type="GO" id="GO:0000287">
    <property type="term" value="F:magnesium ion binding"/>
    <property type="evidence" value="ECO:0007669"/>
    <property type="project" value="UniProtKB-UniRule"/>
</dbReference>
<dbReference type="GO" id="GO:0003977">
    <property type="term" value="F:UDP-N-acetylglucosamine diphosphorylase activity"/>
    <property type="evidence" value="ECO:0007669"/>
    <property type="project" value="UniProtKB-UniRule"/>
</dbReference>
<dbReference type="GO" id="GO:0000902">
    <property type="term" value="P:cell morphogenesis"/>
    <property type="evidence" value="ECO:0007669"/>
    <property type="project" value="UniProtKB-UniRule"/>
</dbReference>
<dbReference type="GO" id="GO:0071555">
    <property type="term" value="P:cell wall organization"/>
    <property type="evidence" value="ECO:0007669"/>
    <property type="project" value="UniProtKB-KW"/>
</dbReference>
<dbReference type="GO" id="GO:0009245">
    <property type="term" value="P:lipid A biosynthetic process"/>
    <property type="evidence" value="ECO:0007669"/>
    <property type="project" value="UniProtKB-UniRule"/>
</dbReference>
<dbReference type="GO" id="GO:0009252">
    <property type="term" value="P:peptidoglycan biosynthetic process"/>
    <property type="evidence" value="ECO:0007669"/>
    <property type="project" value="UniProtKB-UniRule"/>
</dbReference>
<dbReference type="GO" id="GO:0008360">
    <property type="term" value="P:regulation of cell shape"/>
    <property type="evidence" value="ECO:0007669"/>
    <property type="project" value="UniProtKB-KW"/>
</dbReference>
<dbReference type="GO" id="GO:0006048">
    <property type="term" value="P:UDP-N-acetylglucosamine biosynthetic process"/>
    <property type="evidence" value="ECO:0007669"/>
    <property type="project" value="UniProtKB-UniPathway"/>
</dbReference>
<dbReference type="CDD" id="cd02540">
    <property type="entry name" value="GT2_GlmU_N_bac"/>
    <property type="match status" value="1"/>
</dbReference>
<dbReference type="CDD" id="cd03353">
    <property type="entry name" value="LbH_GlmU_C"/>
    <property type="match status" value="1"/>
</dbReference>
<dbReference type="Gene3D" id="2.160.10.10">
    <property type="entry name" value="Hexapeptide repeat proteins"/>
    <property type="match status" value="1"/>
</dbReference>
<dbReference type="Gene3D" id="3.90.550.10">
    <property type="entry name" value="Spore Coat Polysaccharide Biosynthesis Protein SpsA, Chain A"/>
    <property type="match status" value="1"/>
</dbReference>
<dbReference type="HAMAP" id="MF_01631">
    <property type="entry name" value="GlmU"/>
    <property type="match status" value="1"/>
</dbReference>
<dbReference type="InterPro" id="IPR005882">
    <property type="entry name" value="Bifunctional_GlmU"/>
</dbReference>
<dbReference type="InterPro" id="IPR050065">
    <property type="entry name" value="GlmU-like"/>
</dbReference>
<dbReference type="InterPro" id="IPR038009">
    <property type="entry name" value="GlmU_C_LbH"/>
</dbReference>
<dbReference type="InterPro" id="IPR001451">
    <property type="entry name" value="Hexapep"/>
</dbReference>
<dbReference type="InterPro" id="IPR018357">
    <property type="entry name" value="Hexapep_transf_CS"/>
</dbReference>
<dbReference type="InterPro" id="IPR025877">
    <property type="entry name" value="MobA-like_NTP_Trfase"/>
</dbReference>
<dbReference type="InterPro" id="IPR029044">
    <property type="entry name" value="Nucleotide-diphossugar_trans"/>
</dbReference>
<dbReference type="InterPro" id="IPR011004">
    <property type="entry name" value="Trimer_LpxA-like_sf"/>
</dbReference>
<dbReference type="NCBIfam" id="TIGR01173">
    <property type="entry name" value="glmU"/>
    <property type="match status" value="1"/>
</dbReference>
<dbReference type="NCBIfam" id="NF010936">
    <property type="entry name" value="PRK14356.1"/>
    <property type="match status" value="1"/>
</dbReference>
<dbReference type="PANTHER" id="PTHR43584:SF3">
    <property type="entry name" value="BIFUNCTIONAL PROTEIN GLMU"/>
    <property type="match status" value="1"/>
</dbReference>
<dbReference type="PANTHER" id="PTHR43584">
    <property type="entry name" value="NUCLEOTIDYL TRANSFERASE"/>
    <property type="match status" value="1"/>
</dbReference>
<dbReference type="Pfam" id="PF00132">
    <property type="entry name" value="Hexapep"/>
    <property type="match status" value="1"/>
</dbReference>
<dbReference type="Pfam" id="PF12804">
    <property type="entry name" value="NTP_transf_3"/>
    <property type="match status" value="1"/>
</dbReference>
<dbReference type="SUPFAM" id="SSF53448">
    <property type="entry name" value="Nucleotide-diphospho-sugar transferases"/>
    <property type="match status" value="1"/>
</dbReference>
<dbReference type="SUPFAM" id="SSF51161">
    <property type="entry name" value="Trimeric LpxA-like enzymes"/>
    <property type="match status" value="1"/>
</dbReference>
<dbReference type="PROSITE" id="PS00101">
    <property type="entry name" value="HEXAPEP_TRANSFERASES"/>
    <property type="match status" value="1"/>
</dbReference>
<sequence>MASITGALILAAGKGTRMHSDKPKVLQSILGEPMLRFVYDALEPLFGGNLWTVIGHKADMVREAFKGEDHRFVVQEKQLGTGHALQAAWGELKAAGLDRVVVVNGDTPLLPTSTVATFLKEAMDADVAFMTLTLPDPGAYGRVVRHNRRVVAIVEAKDYDETLYGPEPDEINAGIYCLRMDAVEKLLPRLTNANKSGEYYITDLVGLAVAERMDVIGVECGQDPNLLGVNDPAELIRSEALVRARIALNWIEKRVLIHAPETVRISPRAVLEPGAEIYGPCEIYGASRIARAAVVHSHCWLRDAVVAEGATVHPFSHVEKAEIGPDCVVGPYARLRPGAVMEEGARVGNFVEMKKARLCKGAKANHLTYLGDAEVGPGANIGAGTITCNYDGVHKHKTVIGEGAFIGSNSALVAPVTIGAGSLVGAGSVITKDVPDDSLAIARGRQTTLPRRRNS</sequence>
<accession>B8DKH2</accession>
<protein>
    <recommendedName>
        <fullName evidence="1">Bifunctional protein GlmU</fullName>
    </recommendedName>
    <domain>
        <recommendedName>
            <fullName evidence="1">UDP-N-acetylglucosamine pyrophosphorylase</fullName>
            <ecNumber evidence="1">2.7.7.23</ecNumber>
        </recommendedName>
        <alternativeName>
            <fullName evidence="1">N-acetylglucosamine-1-phosphate uridyltransferase</fullName>
        </alternativeName>
    </domain>
    <domain>
        <recommendedName>
            <fullName evidence="1">Glucosamine-1-phosphate N-acetyltransferase</fullName>
            <ecNumber evidence="1">2.3.1.157</ecNumber>
        </recommendedName>
    </domain>
</protein>
<keyword id="KW-0012">Acyltransferase</keyword>
<keyword id="KW-0133">Cell shape</keyword>
<keyword id="KW-0961">Cell wall biogenesis/degradation</keyword>
<keyword id="KW-0963">Cytoplasm</keyword>
<keyword id="KW-0460">Magnesium</keyword>
<keyword id="KW-0479">Metal-binding</keyword>
<keyword id="KW-0511">Multifunctional enzyme</keyword>
<keyword id="KW-0548">Nucleotidyltransferase</keyword>
<keyword id="KW-0573">Peptidoglycan synthesis</keyword>
<keyword id="KW-0677">Repeat</keyword>
<keyword id="KW-0808">Transferase</keyword>
<gene>
    <name evidence="1" type="primary">glmU</name>
    <name type="ordered locus">DvMF_1181</name>
</gene>
<feature type="chain" id="PRO_1000186439" description="Bifunctional protein GlmU">
    <location>
        <begin position="1"/>
        <end position="455"/>
    </location>
</feature>
<feature type="region of interest" description="Pyrophosphorylase" evidence="1">
    <location>
        <begin position="1"/>
        <end position="232"/>
    </location>
</feature>
<feature type="region of interest" description="Linker" evidence="1">
    <location>
        <begin position="233"/>
        <end position="253"/>
    </location>
</feature>
<feature type="region of interest" description="N-acetyltransferase" evidence="1">
    <location>
        <begin position="254"/>
        <end position="455"/>
    </location>
</feature>
<feature type="active site" description="Proton acceptor" evidence="1">
    <location>
        <position position="366"/>
    </location>
</feature>
<feature type="binding site" evidence="1">
    <location>
        <begin position="10"/>
        <end position="13"/>
    </location>
    <ligand>
        <name>UDP-N-acetyl-alpha-D-glucosamine</name>
        <dbReference type="ChEBI" id="CHEBI:57705"/>
    </ligand>
</feature>
<feature type="binding site" evidence="1">
    <location>
        <position position="24"/>
    </location>
    <ligand>
        <name>UDP-N-acetyl-alpha-D-glucosamine</name>
        <dbReference type="ChEBI" id="CHEBI:57705"/>
    </ligand>
</feature>
<feature type="binding site" evidence="1">
    <location>
        <position position="75"/>
    </location>
    <ligand>
        <name>UDP-N-acetyl-alpha-D-glucosamine</name>
        <dbReference type="ChEBI" id="CHEBI:57705"/>
    </ligand>
</feature>
<feature type="binding site" evidence="1">
    <location>
        <begin position="80"/>
        <end position="81"/>
    </location>
    <ligand>
        <name>UDP-N-acetyl-alpha-D-glucosamine</name>
        <dbReference type="ChEBI" id="CHEBI:57705"/>
    </ligand>
</feature>
<feature type="binding site" evidence="1">
    <location>
        <position position="106"/>
    </location>
    <ligand>
        <name>Mg(2+)</name>
        <dbReference type="ChEBI" id="CHEBI:18420"/>
    </ligand>
</feature>
<feature type="binding site" evidence="1">
    <location>
        <position position="141"/>
    </location>
    <ligand>
        <name>UDP-N-acetyl-alpha-D-glucosamine</name>
        <dbReference type="ChEBI" id="CHEBI:57705"/>
    </ligand>
</feature>
<feature type="binding site" evidence="1">
    <location>
        <position position="155"/>
    </location>
    <ligand>
        <name>UDP-N-acetyl-alpha-D-glucosamine</name>
        <dbReference type="ChEBI" id="CHEBI:57705"/>
    </ligand>
</feature>
<feature type="binding site" evidence="1">
    <location>
        <position position="172"/>
    </location>
    <ligand>
        <name>UDP-N-acetyl-alpha-D-glucosamine</name>
        <dbReference type="ChEBI" id="CHEBI:57705"/>
    </ligand>
</feature>
<feature type="binding site" evidence="1">
    <location>
        <position position="230"/>
    </location>
    <ligand>
        <name>Mg(2+)</name>
        <dbReference type="ChEBI" id="CHEBI:18420"/>
    </ligand>
</feature>
<feature type="binding site" evidence="1">
    <location>
        <position position="230"/>
    </location>
    <ligand>
        <name>UDP-N-acetyl-alpha-D-glucosamine</name>
        <dbReference type="ChEBI" id="CHEBI:57705"/>
    </ligand>
</feature>
<feature type="binding site" evidence="1">
    <location>
        <position position="336"/>
    </location>
    <ligand>
        <name>UDP-N-acetyl-alpha-D-glucosamine</name>
        <dbReference type="ChEBI" id="CHEBI:57705"/>
    </ligand>
</feature>
<feature type="binding site" evidence="1">
    <location>
        <position position="354"/>
    </location>
    <ligand>
        <name>UDP-N-acetyl-alpha-D-glucosamine</name>
        <dbReference type="ChEBI" id="CHEBI:57705"/>
    </ligand>
</feature>
<feature type="binding site" evidence="1">
    <location>
        <position position="369"/>
    </location>
    <ligand>
        <name>UDP-N-acetyl-alpha-D-glucosamine</name>
        <dbReference type="ChEBI" id="CHEBI:57705"/>
    </ligand>
</feature>
<feature type="binding site" evidence="1">
    <location>
        <position position="380"/>
    </location>
    <ligand>
        <name>UDP-N-acetyl-alpha-D-glucosamine</name>
        <dbReference type="ChEBI" id="CHEBI:57705"/>
    </ligand>
</feature>
<feature type="binding site" evidence="1">
    <location>
        <position position="383"/>
    </location>
    <ligand>
        <name>acetyl-CoA</name>
        <dbReference type="ChEBI" id="CHEBI:57288"/>
    </ligand>
</feature>
<feature type="binding site" evidence="1">
    <location>
        <begin position="389"/>
        <end position="390"/>
    </location>
    <ligand>
        <name>acetyl-CoA</name>
        <dbReference type="ChEBI" id="CHEBI:57288"/>
    </ligand>
</feature>
<feature type="binding site" evidence="1">
    <location>
        <position position="408"/>
    </location>
    <ligand>
        <name>acetyl-CoA</name>
        <dbReference type="ChEBI" id="CHEBI:57288"/>
    </ligand>
</feature>
<feature type="binding site" evidence="1">
    <location>
        <position position="426"/>
    </location>
    <ligand>
        <name>acetyl-CoA</name>
        <dbReference type="ChEBI" id="CHEBI:57288"/>
    </ligand>
</feature>
<feature type="binding site" evidence="1">
    <location>
        <position position="443"/>
    </location>
    <ligand>
        <name>acetyl-CoA</name>
        <dbReference type="ChEBI" id="CHEBI:57288"/>
    </ligand>
</feature>